<keyword id="KW-0002">3D-structure</keyword>
<keyword id="KW-0119">Carbohydrate metabolism</keyword>
<keyword id="KW-0136">Cellulose degradation</keyword>
<keyword id="KW-1015">Disulfide bond</keyword>
<keyword id="KW-0325">Glycoprotein</keyword>
<keyword id="KW-0326">Glycosidase</keyword>
<keyword id="KW-0378">Hydrolase</keyword>
<keyword id="KW-0624">Polysaccharide degradation</keyword>
<keyword id="KW-0732">Signal</keyword>
<name>GUX6_HUMIN</name>
<feature type="signal peptide" evidence="1">
    <location>
        <begin position="1"/>
        <end position="16"/>
    </location>
</feature>
<feature type="chain" id="PRO_0000248843" description="Exoglucanase-6A">
    <location>
        <begin position="17"/>
        <end position="476"/>
    </location>
</feature>
<feature type="domain" description="CBM1" evidence="2">
    <location>
        <begin position="33"/>
        <end position="60"/>
    </location>
</feature>
<feature type="region of interest" description="Disordered" evidence="5">
    <location>
        <begin position="67"/>
        <end position="94"/>
    </location>
</feature>
<feature type="region of interest" description="Substrate binding loop 1" evidence="6 7 8">
    <location>
        <begin position="200"/>
        <end position="222"/>
    </location>
</feature>
<feature type="region of interest" description="Substrate binding loop 2" evidence="6 7 8">
    <location>
        <begin position="423"/>
        <end position="461"/>
    </location>
</feature>
<feature type="active site" description="Proton donor" evidence="4 6 8">
    <location>
        <position position="252"/>
    </location>
</feature>
<feature type="active site" description="Proton acceptor" evidence="3 6 7 8">
    <location>
        <position position="431"/>
    </location>
</feature>
<feature type="binding site" evidence="6 7 8">
    <location>
        <position position="163"/>
    </location>
    <ligand>
        <name>substrate</name>
    </ligand>
</feature>
<feature type="binding site" evidence="6 7 8">
    <location>
        <position position="165"/>
    </location>
    <ligand>
        <name>substrate</name>
    </ligand>
</feature>
<feature type="binding site" evidence="6 7 8">
    <location>
        <position position="297"/>
    </location>
    <ligand>
        <name>substrate</name>
    </ligand>
</feature>
<feature type="binding site" evidence="6 7 8">
    <location>
        <position position="300"/>
    </location>
    <ligand>
        <name>substrate</name>
    </ligand>
</feature>
<feature type="binding site" evidence="6 7 8">
    <location>
        <position position="336"/>
    </location>
    <ligand>
        <name>substrate</name>
    </ligand>
</feature>
<feature type="binding site" evidence="6 7 8">
    <location>
        <position position="397"/>
    </location>
    <ligand>
        <name>substrate</name>
    </ligand>
</feature>
<feature type="binding site" evidence="6 7 8">
    <location>
        <position position="425"/>
    </location>
    <ligand>
        <name>substrate</name>
    </ligand>
</feature>
<feature type="binding site" evidence="6 7 8">
    <location>
        <position position="429"/>
    </location>
    <ligand>
        <name>substrate</name>
    </ligand>
</feature>
<feature type="glycosylation site" description="O-linked (Man...) threonine" evidence="10">
    <location>
        <position position="144"/>
    </location>
</feature>
<feature type="glycosylation site" description="O-linked (Man...) serine" evidence="10">
    <location>
        <position position="153"/>
    </location>
</feature>
<feature type="glycosylation site" description="N-linked (GlcNAc...) asparagine" evidence="6 7 8 10">
    <location>
        <position position="167"/>
    </location>
</feature>
<feature type="disulfide bond" evidence="1">
    <location>
        <begin position="33"/>
        <end position="50"/>
    </location>
</feature>
<feature type="disulfide bond" evidence="1">
    <location>
        <begin position="44"/>
        <end position="60"/>
    </location>
</feature>
<feature type="turn" evidence="21">
    <location>
        <begin position="119"/>
        <end position="122"/>
    </location>
</feature>
<feature type="strand" evidence="22">
    <location>
        <begin position="123"/>
        <end position="125"/>
    </location>
</feature>
<feature type="helix" evidence="21">
    <location>
        <begin position="129"/>
        <end position="137"/>
    </location>
</feature>
<feature type="helix" evidence="21">
    <location>
        <begin position="140"/>
        <end position="142"/>
    </location>
</feature>
<feature type="helix" evidence="21">
    <location>
        <begin position="146"/>
        <end position="155"/>
    </location>
</feature>
<feature type="strand" evidence="21">
    <location>
        <begin position="162"/>
        <end position="164"/>
    </location>
</feature>
<feature type="helix" evidence="21">
    <location>
        <begin position="167"/>
        <end position="169"/>
    </location>
</feature>
<feature type="turn" evidence="21">
    <location>
        <begin position="170"/>
        <end position="172"/>
    </location>
</feature>
<feature type="helix" evidence="21">
    <location>
        <begin position="173"/>
        <end position="186"/>
    </location>
</feature>
<feature type="strand" evidence="21">
    <location>
        <begin position="193"/>
        <end position="199"/>
    </location>
</feature>
<feature type="strand" evidence="21">
    <location>
        <begin position="209"/>
        <end position="211"/>
    </location>
</feature>
<feature type="helix" evidence="21">
    <location>
        <begin position="218"/>
        <end position="220"/>
    </location>
</feature>
<feature type="helix" evidence="21">
    <location>
        <begin position="222"/>
        <end position="239"/>
    </location>
</feature>
<feature type="turn" evidence="21">
    <location>
        <begin position="240"/>
        <end position="242"/>
    </location>
</feature>
<feature type="strand" evidence="21">
    <location>
        <begin position="245"/>
        <end position="249"/>
    </location>
</feature>
<feature type="helix" evidence="21">
    <location>
        <begin position="255"/>
        <end position="259"/>
    </location>
</feature>
<feature type="helix" evidence="21">
    <location>
        <begin position="264"/>
        <end position="283"/>
    </location>
</feature>
<feature type="strand" evidence="21">
    <location>
        <begin position="289"/>
        <end position="294"/>
    </location>
</feature>
<feature type="turn" evidence="21">
    <location>
        <begin position="298"/>
        <end position="302"/>
    </location>
</feature>
<feature type="helix" evidence="21">
    <location>
        <begin position="304"/>
        <end position="320"/>
    </location>
</feature>
<feature type="strand" evidence="21">
    <location>
        <begin position="327"/>
        <end position="333"/>
    </location>
</feature>
<feature type="helix" evidence="21">
    <location>
        <begin position="347"/>
        <end position="349"/>
    </location>
</feature>
<feature type="helix" evidence="21">
    <location>
        <begin position="357"/>
        <end position="370"/>
    </location>
</feature>
<feature type="strand" evidence="21">
    <location>
        <begin position="376"/>
        <end position="380"/>
    </location>
</feature>
<feature type="strand" evidence="21">
    <location>
        <begin position="385"/>
        <end position="388"/>
    </location>
</feature>
<feature type="strand" evidence="21">
    <location>
        <begin position="398"/>
        <end position="402"/>
    </location>
</feature>
<feature type="strand" evidence="21">
    <location>
        <begin position="418"/>
        <end position="422"/>
    </location>
</feature>
<feature type="helix" evidence="21">
    <location>
        <begin position="443"/>
        <end position="446"/>
    </location>
</feature>
<feature type="helix" evidence="21">
    <location>
        <begin position="462"/>
        <end position="470"/>
    </location>
</feature>
<comment type="function">
    <text evidence="10">Plays a central role in the recycling of plant biomass. The biological conversion of cellulose to glucose generally requires three types of hydrolytic enzymes: (1) Endoglucanases which cut internal beta-1,4-glucosidic bonds; (2) Exocellobiohydrolases that cut the disaccharide cellobiose from the non-reducing end of the cellulose polymer chain; (3) Beta-1,4-glucosidases which hydrolyze the cellobiose and other short cello-oligosaccharides to glucose.</text>
</comment>
<comment type="catalytic activity">
    <reaction evidence="9">
        <text>Hydrolysis of (1-&gt;4)-beta-D-glucosidic linkages in cellulose and cellotetraose, releasing cellobiose from the non-reducing ends of the chains.</text>
        <dbReference type="EC" id="3.2.1.91"/>
    </reaction>
</comment>
<comment type="subunit">
    <text evidence="6 7 8 10">Monomer.</text>
</comment>
<comment type="similarity">
    <text evidence="1">Belongs to the glycosyl hydrolase 6 (cellulase A) family.</text>
</comment>
<sequence length="476" mass="51276">MAKFFLTAAFAAAALAAPVVEERQNCAPTWGQCGGIGFNGPTCCQSGSTCVKQNDWYSQCLPGSQVTTTSTTSTSSSSTTSRATSTTRTGGVTSITTAPTRTVTIPGGATTTASYNGNPFEGVQLWANNYYRSEVHTLAIPQITDPALRAAASAVAEVPSFQWLDRNVTVDTLLVETLSEIRAANQAGANPPYAAQIVVYDLPDRDCAAAASNGEWAIANNGANNYKGYINRIREILISFSDVRTILVIEPDSLANMVTNMNVAKCSGAASTYRELTIYALKQLDLPHVAMYMDAGHAGWLGWPANIQPAAELFAKIYEDAGKPRAVRGLATNVANYNAWSISSPPPYTSPNPNYDEKHYIEAFRPLLEARGFPAQFIVDQGRSGKQPTGQKEWGHWCNAIGTGFGMRPTANTGHQYVDAFVWVKPGGECDGTSDTTAARYDYHCGLEDALKPAPEAGQWFQAYFEQLLRNANPPF</sequence>
<accession>Q9C1S9</accession>
<gene>
    <name evidence="11 12 13 14" type="primary">cel6A</name>
    <name evidence="16" type="synonym">avi2</name>
</gene>
<reference evidence="16" key="1">
    <citation type="journal article" date="2003" name="Biosci. Biotechnol. Biochem.">
        <title>Cloning and overexpression of the avi2 gene encoding a major cellulase produced by Humicola insolens FERM BP-5977.</title>
        <authorList>
            <person name="Moriya T."/>
            <person name="Watanabe M."/>
            <person name="Sumida N."/>
            <person name="Okakura K."/>
            <person name="Murakami T."/>
        </authorList>
    </citation>
    <scope>NUCLEOTIDE SEQUENCE [GENOMIC DNA]</scope>
    <source>
        <strain>FERM BP-5977</strain>
    </source>
</reference>
<reference evidence="15" key="2">
    <citation type="journal article" date="1997" name="J. Biotechnol.">
        <title>Enzymatic properties of cellulases from Humicola insolens.</title>
        <authorList>
            <person name="Schuelein M."/>
        </authorList>
    </citation>
    <scope>CATALYTIC ACTIVITY</scope>
</reference>
<reference evidence="15 20" key="3">
    <citation type="journal article" date="1999" name="Biochemistry">
        <title>Structural changes of the active site tunnel of Humicola insolens cellobiohydrolase, Cel6A, upon oligosaccharide binding.</title>
        <authorList>
            <person name="Varrot A."/>
            <person name="Schuelein M."/>
            <person name="Davies G.J."/>
        </authorList>
    </citation>
    <scope>X-RAY CRYSTALLOGRAPHY (1.7 ANGSTROMS) OF 115-476 IN COMPLEX WITH GLUCOSE AND CELLOTETRAOSE</scope>
    <scope>ACTIVE SITE</scope>
    <scope>GLYCOSYLATION AT ASN-167</scope>
</reference>
<reference evidence="15 18" key="4">
    <citation type="journal article" date="2002" name="Acta Crystallogr. D">
        <title>Structure of the Humicola insolens cellobiohydrolase Cel6A D416A mutant in complex with a non-hydrolysable substrate analogue, methyl cellobiosyl-4-thio-beta-cellobioside, at 1.9 A.</title>
        <authorList>
            <person name="Varrot A."/>
            <person name="Frandsen T.P."/>
            <person name="Driguez H."/>
            <person name="Davies G.J."/>
        </authorList>
    </citation>
    <scope>X-RAY CRYSTALLOGRAPHY (1.9 ANGSTROMS) OF 115-476 OF MUTANT ALA-416 IN COMPLEX WITH SUBSTRATE ANALOG</scope>
    <scope>GLYCOSYLATION AT ASN-167</scope>
</reference>
<reference evidence="15 19" key="5">
    <citation type="journal article" date="2003" name="Structure">
        <title>Structural basis for ligand binding and processivity in cellobiohydrolase Cel6A from Humicola insolens.</title>
        <authorList>
            <person name="Varrot A."/>
            <person name="Frandsen T.P."/>
            <person name="von Ossowski I."/>
            <person name="Boyer V."/>
            <person name="Cottaz S."/>
            <person name="Driguez H."/>
            <person name="Schuelein M."/>
            <person name="Davies G.J."/>
        </authorList>
    </citation>
    <scope>X-RAY CRYSTALLOGRAPHY (1.11 ANGSTROMS) OF 113-476 OF MUTANT ASN-431 IN COMPLEX WITH SUBSTRATE ANALOGS</scope>
    <scope>GLYCOSYLATION AT ASN-167</scope>
</reference>
<reference evidence="15 17" key="6">
    <citation type="journal article" date="1999" name="Biochem. J.">
        <title>Crystal structure of the catalytic core domain of the family 6 cellobiohydrolase II, Cel6A, from Humicola insolens, at 1.92 A resolution.</title>
        <authorList>
            <person name="Varrot A."/>
            <person name="Hastrup S."/>
            <person name="Schuelein M."/>
            <person name="Davies G.J."/>
        </authorList>
    </citation>
    <scope>X-RAY CRYSTALLOGRAPHY (1.92 ANGSTROMS) OF 117-476</scope>
    <scope>FUNCTION</scope>
    <scope>SUBUNIT</scope>
    <scope>GLYCOSYLATION AT THR-144; SER-153 AND ASN-167</scope>
</reference>
<evidence type="ECO:0000255" key="1"/>
<evidence type="ECO:0000255" key="2">
    <source>
        <dbReference type="PROSITE-ProRule" id="PRU00597"/>
    </source>
</evidence>
<evidence type="ECO:0000255" key="3">
    <source>
        <dbReference type="PROSITE-ProRule" id="PRU10056"/>
    </source>
</evidence>
<evidence type="ECO:0000255" key="4">
    <source>
        <dbReference type="PROSITE-ProRule" id="PRU10057"/>
    </source>
</evidence>
<evidence type="ECO:0000256" key="5">
    <source>
        <dbReference type="SAM" id="MobiDB-lite"/>
    </source>
</evidence>
<evidence type="ECO:0000269" key="6">
    <source>
    </source>
</evidence>
<evidence type="ECO:0000269" key="7">
    <source>
    </source>
</evidence>
<evidence type="ECO:0000269" key="8">
    <source>
    </source>
</evidence>
<evidence type="ECO:0000269" key="9">
    <source>
    </source>
</evidence>
<evidence type="ECO:0000269" key="10">
    <source>
    </source>
</evidence>
<evidence type="ECO:0000303" key="11">
    <source>
    </source>
</evidence>
<evidence type="ECO:0000303" key="12">
    <source>
    </source>
</evidence>
<evidence type="ECO:0000303" key="13">
    <source>
    </source>
</evidence>
<evidence type="ECO:0000303" key="14">
    <source>
    </source>
</evidence>
<evidence type="ECO:0000305" key="15"/>
<evidence type="ECO:0000312" key="16">
    <source>
        <dbReference type="EMBL" id="BAB39154.1"/>
    </source>
</evidence>
<evidence type="ECO:0000312" key="17">
    <source>
        <dbReference type="PDB" id="1BVW"/>
    </source>
</evidence>
<evidence type="ECO:0000312" key="18">
    <source>
        <dbReference type="PDB" id="1GZ1"/>
    </source>
</evidence>
<evidence type="ECO:0000312" key="19">
    <source>
        <dbReference type="PDB" id="1OC7"/>
    </source>
</evidence>
<evidence type="ECO:0000312" key="20">
    <source>
        <dbReference type="PDB" id="2BVW"/>
    </source>
</evidence>
<evidence type="ECO:0007829" key="21">
    <source>
        <dbReference type="PDB" id="1OC7"/>
    </source>
</evidence>
<evidence type="ECO:0007829" key="22">
    <source>
        <dbReference type="PDB" id="2BVW"/>
    </source>
</evidence>
<protein>
    <recommendedName>
        <fullName>Exoglucanase-6A</fullName>
        <ecNumber>3.2.1.91</ecNumber>
    </recommendedName>
    <alternativeName>
        <fullName>1,4-beta-cellobiohydrolase 6A</fullName>
    </alternativeName>
    <alternativeName>
        <fullName>Avicelase 2</fullName>
    </alternativeName>
    <alternativeName>
        <fullName>Beta-glucancellobiohydrolase 6A</fullName>
    </alternativeName>
    <alternativeName>
        <fullName>Exocellobiohydrolase 6A</fullName>
    </alternativeName>
</protein>
<organism>
    <name type="scientific">Humicola insolens</name>
    <name type="common">Soft-rot fungus</name>
    <dbReference type="NCBI Taxonomy" id="85995"/>
    <lineage>
        <taxon>Eukaryota</taxon>
        <taxon>Fungi</taxon>
        <taxon>Dikarya</taxon>
        <taxon>Ascomycota</taxon>
        <taxon>Pezizomycotina</taxon>
        <taxon>Sordariomycetes</taxon>
        <taxon>Sordariomycetidae</taxon>
        <taxon>Sordariales</taxon>
        <taxon>Chaetomiaceae</taxon>
        <taxon>Mycothermus</taxon>
    </lineage>
</organism>
<proteinExistence type="evidence at protein level"/>
<dbReference type="EC" id="3.2.1.91"/>
<dbReference type="EMBL" id="AB048710">
    <property type="protein sequence ID" value="BAB39154.1"/>
    <property type="molecule type" value="Genomic_DNA"/>
</dbReference>
<dbReference type="PDB" id="1BVW">
    <property type="method" value="X-ray"/>
    <property type="resolution" value="1.92 A"/>
    <property type="chains" value="A=117-476"/>
</dbReference>
<dbReference type="PDB" id="1GZ1">
    <property type="method" value="X-ray"/>
    <property type="resolution" value="1.90 A"/>
    <property type="chains" value="A=115-476"/>
</dbReference>
<dbReference type="PDB" id="1OC5">
    <property type="method" value="X-ray"/>
    <property type="resolution" value="1.70 A"/>
    <property type="chains" value="A=113-476"/>
</dbReference>
<dbReference type="PDB" id="1OC6">
    <property type="method" value="X-ray"/>
    <property type="resolution" value="1.50 A"/>
    <property type="chains" value="A=113-476"/>
</dbReference>
<dbReference type="PDB" id="1OC7">
    <property type="method" value="X-ray"/>
    <property type="resolution" value="1.11 A"/>
    <property type="chains" value="A=113-476"/>
</dbReference>
<dbReference type="PDB" id="1OCB">
    <property type="method" value="X-ray"/>
    <property type="resolution" value="1.75 A"/>
    <property type="chains" value="A/B=115-476"/>
</dbReference>
<dbReference type="PDB" id="1OCJ">
    <property type="method" value="X-ray"/>
    <property type="resolution" value="1.30 A"/>
    <property type="chains" value="A=115-476"/>
</dbReference>
<dbReference type="PDB" id="1OCN">
    <property type="method" value="X-ray"/>
    <property type="resolution" value="1.31 A"/>
    <property type="chains" value="A=115-476"/>
</dbReference>
<dbReference type="PDB" id="2BVW">
    <property type="method" value="X-ray"/>
    <property type="resolution" value="1.70 A"/>
    <property type="chains" value="A/B=115-476"/>
</dbReference>
<dbReference type="PDB" id="4I5R">
    <property type="method" value="X-ray"/>
    <property type="resolution" value="1.50 A"/>
    <property type="chains" value="A=117-161"/>
</dbReference>
<dbReference type="PDB" id="4I5U">
    <property type="method" value="X-ray"/>
    <property type="resolution" value="1.22 A"/>
    <property type="chains" value="A=117-161"/>
</dbReference>
<dbReference type="PDBsum" id="1BVW"/>
<dbReference type="PDBsum" id="1GZ1"/>
<dbReference type="PDBsum" id="1OC5"/>
<dbReference type="PDBsum" id="1OC6"/>
<dbReference type="PDBsum" id="1OC7"/>
<dbReference type="PDBsum" id="1OCB"/>
<dbReference type="PDBsum" id="1OCJ"/>
<dbReference type="PDBsum" id="1OCN"/>
<dbReference type="PDBsum" id="2BVW"/>
<dbReference type="PDBsum" id="4I5R"/>
<dbReference type="PDBsum" id="4I5U"/>
<dbReference type="SMR" id="Q9C1S9"/>
<dbReference type="CAZy" id="CBM1">
    <property type="family name" value="Carbohydrate-Binding Module Family 1"/>
</dbReference>
<dbReference type="CAZy" id="GH6">
    <property type="family name" value="Glycoside Hydrolase Family 6"/>
</dbReference>
<dbReference type="GlyCosmos" id="Q9C1S9">
    <property type="glycosylation" value="3 sites, No reported glycans"/>
</dbReference>
<dbReference type="iPTMnet" id="Q9C1S9"/>
<dbReference type="BRENDA" id="3.2.1.91">
    <property type="organism ID" value="2710"/>
</dbReference>
<dbReference type="EvolutionaryTrace" id="Q9C1S9"/>
<dbReference type="PRO" id="PR:Q9C1S9"/>
<dbReference type="GO" id="GO:0005576">
    <property type="term" value="C:extracellular region"/>
    <property type="evidence" value="ECO:0007669"/>
    <property type="project" value="InterPro"/>
</dbReference>
<dbReference type="GO" id="GO:0016162">
    <property type="term" value="F:cellulose 1,4-beta-cellobiosidase activity"/>
    <property type="evidence" value="ECO:0007669"/>
    <property type="project" value="UniProtKB-EC"/>
</dbReference>
<dbReference type="GO" id="GO:0030248">
    <property type="term" value="F:cellulose binding"/>
    <property type="evidence" value="ECO:0007669"/>
    <property type="project" value="InterPro"/>
</dbReference>
<dbReference type="GO" id="GO:0030245">
    <property type="term" value="P:cellulose catabolic process"/>
    <property type="evidence" value="ECO:0007669"/>
    <property type="project" value="UniProtKB-KW"/>
</dbReference>
<dbReference type="DisProt" id="DP01080"/>
<dbReference type="FunFam" id="3.20.20.40:FF:000001">
    <property type="entry name" value="Glucanase"/>
    <property type="match status" value="1"/>
</dbReference>
<dbReference type="Gene3D" id="3.20.20.40">
    <property type="entry name" value="1, 4-beta cellobiohydrolase"/>
    <property type="match status" value="1"/>
</dbReference>
<dbReference type="InterPro" id="IPR016288">
    <property type="entry name" value="Beta_cellobiohydrolase"/>
</dbReference>
<dbReference type="InterPro" id="IPR036434">
    <property type="entry name" value="Beta_cellobiohydrolase_sf"/>
</dbReference>
<dbReference type="InterPro" id="IPR035971">
    <property type="entry name" value="CBD_sf"/>
</dbReference>
<dbReference type="InterPro" id="IPR000254">
    <property type="entry name" value="Cellulose-bd_dom_fun"/>
</dbReference>
<dbReference type="InterPro" id="IPR001524">
    <property type="entry name" value="Glyco_hydro_6_CS"/>
</dbReference>
<dbReference type="PANTHER" id="PTHR34876">
    <property type="match status" value="1"/>
</dbReference>
<dbReference type="PANTHER" id="PTHR34876:SF4">
    <property type="entry name" value="1,4-BETA-D-GLUCAN CELLOBIOHYDROLASE C-RELATED"/>
    <property type="match status" value="1"/>
</dbReference>
<dbReference type="Pfam" id="PF00734">
    <property type="entry name" value="CBM_1"/>
    <property type="match status" value="1"/>
</dbReference>
<dbReference type="Pfam" id="PF01341">
    <property type="entry name" value="Glyco_hydro_6"/>
    <property type="match status" value="1"/>
</dbReference>
<dbReference type="PIRSF" id="PIRSF001100">
    <property type="entry name" value="Beta_cellobiohydrolase"/>
    <property type="match status" value="1"/>
</dbReference>
<dbReference type="PRINTS" id="PR00733">
    <property type="entry name" value="GLHYDRLASE6"/>
</dbReference>
<dbReference type="SMART" id="SM00236">
    <property type="entry name" value="fCBD"/>
    <property type="match status" value="1"/>
</dbReference>
<dbReference type="SUPFAM" id="SSF57180">
    <property type="entry name" value="Cellulose-binding domain"/>
    <property type="match status" value="1"/>
</dbReference>
<dbReference type="SUPFAM" id="SSF51989">
    <property type="entry name" value="Glycosyl hydrolases family 6, cellulases"/>
    <property type="match status" value="1"/>
</dbReference>
<dbReference type="PROSITE" id="PS00562">
    <property type="entry name" value="CBM1_1"/>
    <property type="match status" value="1"/>
</dbReference>
<dbReference type="PROSITE" id="PS51164">
    <property type="entry name" value="CBM1_2"/>
    <property type="match status" value="1"/>
</dbReference>
<dbReference type="PROSITE" id="PS00655">
    <property type="entry name" value="GLYCOSYL_HYDROL_F6_1"/>
    <property type="match status" value="1"/>
</dbReference>
<dbReference type="PROSITE" id="PS00656">
    <property type="entry name" value="GLYCOSYL_HYDROL_F6_2"/>
    <property type="match status" value="1"/>
</dbReference>